<protein>
    <recommendedName>
        <fullName>Trigger factor</fullName>
        <shortName>TF</shortName>
        <ecNumber>5.2.1.8</ecNumber>
    </recommendedName>
    <alternativeName>
        <fullName>PPIase</fullName>
    </alternativeName>
</protein>
<accession>Q9PE42</accession>
<sequence>MPVLIESIGNLERRLTFSVPEDRLESHVDERLREIARTARINGFRAGKVPAKVIEQRFGEKVRAEVLDSLLRETLDSAIRAHSLRLAGAARIDHANEGRLNFVATFEVVPDFGEIDVSKFSVVRRTARVTDVDIDQMIENLRLQRRTWRVAEHGAQVGHLVALETWSQAGDERLPIEGVEAGSTILGSGVMFEQIERGLEGLSKGDEKVLDVTFPDDWRVTQLAGKAVQVHVKVIEVSEPVLLEVNEEFIKSFGVKSGKLEDFRADIRANLERELKGALVSHLRREVGEQLIAAYAHVEMPPRLVEKEARLMLAKQIEQIRLSGRDPTGIPDDAHIGFMDAACKRVLVGLLVGEIAGRNRLRLDPMRVTETLHLIASTYEEPEEVFEMYRNDPKLMEGVQSLVMEEQVIEWIADRAKKTEQVLSFQEAIQQ</sequence>
<keyword id="KW-0131">Cell cycle</keyword>
<keyword id="KW-0132">Cell division</keyword>
<keyword id="KW-0143">Chaperone</keyword>
<keyword id="KW-0963">Cytoplasm</keyword>
<keyword id="KW-0413">Isomerase</keyword>
<keyword id="KW-0697">Rotamase</keyword>
<reference key="1">
    <citation type="journal article" date="2000" name="Nature">
        <title>The genome sequence of the plant pathogen Xylella fastidiosa.</title>
        <authorList>
            <person name="Simpson A.J.G."/>
            <person name="Reinach F.C."/>
            <person name="Arruda P."/>
            <person name="Abreu F.A."/>
            <person name="Acencio M."/>
            <person name="Alvarenga R."/>
            <person name="Alves L.M.C."/>
            <person name="Araya J.E."/>
            <person name="Baia G.S."/>
            <person name="Baptista C.S."/>
            <person name="Barros M.H."/>
            <person name="Bonaccorsi E.D."/>
            <person name="Bordin S."/>
            <person name="Bove J.M."/>
            <person name="Briones M.R.S."/>
            <person name="Bueno M.R.P."/>
            <person name="Camargo A.A."/>
            <person name="Camargo L.E.A."/>
            <person name="Carraro D.M."/>
            <person name="Carrer H."/>
            <person name="Colauto N.B."/>
            <person name="Colombo C."/>
            <person name="Costa F.F."/>
            <person name="Costa M.C.R."/>
            <person name="Costa-Neto C.M."/>
            <person name="Coutinho L.L."/>
            <person name="Cristofani M."/>
            <person name="Dias-Neto E."/>
            <person name="Docena C."/>
            <person name="El-Dorry H."/>
            <person name="Facincani A.P."/>
            <person name="Ferreira A.J.S."/>
            <person name="Ferreira V.C.A."/>
            <person name="Ferro J.A."/>
            <person name="Fraga J.S."/>
            <person name="Franca S.C."/>
            <person name="Franco M.C."/>
            <person name="Frohme M."/>
            <person name="Furlan L.R."/>
            <person name="Garnier M."/>
            <person name="Goldman G.H."/>
            <person name="Goldman M.H.S."/>
            <person name="Gomes S.L."/>
            <person name="Gruber A."/>
            <person name="Ho P.L."/>
            <person name="Hoheisel J.D."/>
            <person name="Junqueira M.L."/>
            <person name="Kemper E.L."/>
            <person name="Kitajima J.P."/>
            <person name="Krieger J.E."/>
            <person name="Kuramae E.E."/>
            <person name="Laigret F."/>
            <person name="Lambais M.R."/>
            <person name="Leite L.C.C."/>
            <person name="Lemos E.G.M."/>
            <person name="Lemos M.V.F."/>
            <person name="Lopes S.A."/>
            <person name="Lopes C.R."/>
            <person name="Machado J.A."/>
            <person name="Machado M.A."/>
            <person name="Madeira A.M.B.N."/>
            <person name="Madeira H.M.F."/>
            <person name="Marino C.L."/>
            <person name="Marques M.V."/>
            <person name="Martins E.A.L."/>
            <person name="Martins E.M.F."/>
            <person name="Matsukuma A.Y."/>
            <person name="Menck C.F.M."/>
            <person name="Miracca E.C."/>
            <person name="Miyaki C.Y."/>
            <person name="Monteiro-Vitorello C.B."/>
            <person name="Moon D.H."/>
            <person name="Nagai M.A."/>
            <person name="Nascimento A.L.T.O."/>
            <person name="Netto L.E.S."/>
            <person name="Nhani A. Jr."/>
            <person name="Nobrega F.G."/>
            <person name="Nunes L.R."/>
            <person name="Oliveira M.A."/>
            <person name="de Oliveira M.C."/>
            <person name="de Oliveira R.C."/>
            <person name="Palmieri D.A."/>
            <person name="Paris A."/>
            <person name="Peixoto B.R."/>
            <person name="Pereira G.A.G."/>
            <person name="Pereira H.A. Jr."/>
            <person name="Pesquero J.B."/>
            <person name="Quaggio R.B."/>
            <person name="Roberto P.G."/>
            <person name="Rodrigues V."/>
            <person name="de Rosa A.J.M."/>
            <person name="de Rosa V.E. Jr."/>
            <person name="de Sa R.G."/>
            <person name="Santelli R.V."/>
            <person name="Sawasaki H.E."/>
            <person name="da Silva A.C.R."/>
            <person name="da Silva A.M."/>
            <person name="da Silva F.R."/>
            <person name="Silva W.A. Jr."/>
            <person name="da Silveira J.F."/>
            <person name="Silvestri M.L.Z."/>
            <person name="Siqueira W.J."/>
            <person name="de Souza A.A."/>
            <person name="de Souza A.P."/>
            <person name="Terenzi M.F."/>
            <person name="Truffi D."/>
            <person name="Tsai S.M."/>
            <person name="Tsuhako M.H."/>
            <person name="Vallada H."/>
            <person name="Van Sluys M.A."/>
            <person name="Verjovski-Almeida S."/>
            <person name="Vettore A.L."/>
            <person name="Zago M.A."/>
            <person name="Zatz M."/>
            <person name="Meidanis J."/>
            <person name="Setubal J.C."/>
        </authorList>
    </citation>
    <scope>NUCLEOTIDE SEQUENCE [LARGE SCALE GENOMIC DNA]</scope>
    <source>
        <strain>9a5c</strain>
    </source>
</reference>
<gene>
    <name type="primary">tig</name>
    <name type="ordered locus">XF_1186</name>
</gene>
<name>TIG_XYLFA</name>
<organism>
    <name type="scientific">Xylella fastidiosa (strain 9a5c)</name>
    <dbReference type="NCBI Taxonomy" id="160492"/>
    <lineage>
        <taxon>Bacteria</taxon>
        <taxon>Pseudomonadati</taxon>
        <taxon>Pseudomonadota</taxon>
        <taxon>Gammaproteobacteria</taxon>
        <taxon>Lysobacterales</taxon>
        <taxon>Lysobacteraceae</taxon>
        <taxon>Xylella</taxon>
    </lineage>
</organism>
<feature type="chain" id="PRO_0000179468" description="Trigger factor">
    <location>
        <begin position="1"/>
        <end position="431"/>
    </location>
</feature>
<feature type="domain" description="PPIase FKBP-type">
    <location>
        <begin position="158"/>
        <end position="243"/>
    </location>
</feature>
<evidence type="ECO:0000250" key="1"/>
<evidence type="ECO:0000305" key="2"/>
<comment type="function">
    <text evidence="1">Involved in protein export. Acts as a chaperone by maintaining the newly synthesized protein in an open conformation. Functions as a peptidyl-prolyl cis-trans isomerase (By similarity).</text>
</comment>
<comment type="catalytic activity">
    <reaction>
        <text>[protein]-peptidylproline (omega=180) = [protein]-peptidylproline (omega=0)</text>
        <dbReference type="Rhea" id="RHEA:16237"/>
        <dbReference type="Rhea" id="RHEA-COMP:10747"/>
        <dbReference type="Rhea" id="RHEA-COMP:10748"/>
        <dbReference type="ChEBI" id="CHEBI:83833"/>
        <dbReference type="ChEBI" id="CHEBI:83834"/>
        <dbReference type="EC" id="5.2.1.8"/>
    </reaction>
</comment>
<comment type="subcellular location">
    <subcellularLocation>
        <location>Cytoplasm</location>
    </subcellularLocation>
    <text evidence="1">About half TF is bound to the ribosome near the polypeptide exit tunnel while the other half is free in the cytoplasm.</text>
</comment>
<comment type="domain">
    <text evidence="1">Consists of 3 domains; the N-terminus binds the ribosome, the middle domain has PPIase activity, while the C-terminus has intrinsic chaperone activity on its own.</text>
</comment>
<comment type="similarity">
    <text evidence="2">Belongs to the FKBP-type PPIase family. Tig subfamily.</text>
</comment>
<dbReference type="EC" id="5.2.1.8"/>
<dbReference type="EMBL" id="AE003849">
    <property type="protein sequence ID" value="AAF83996.1"/>
    <property type="molecule type" value="Genomic_DNA"/>
</dbReference>
<dbReference type="PIR" id="F82713">
    <property type="entry name" value="F82713"/>
</dbReference>
<dbReference type="RefSeq" id="WP_010893697.1">
    <property type="nucleotide sequence ID" value="NC_002488.3"/>
</dbReference>
<dbReference type="SMR" id="Q9PE42"/>
<dbReference type="STRING" id="160492.XF_1186"/>
<dbReference type="KEGG" id="xfa:XF_1186"/>
<dbReference type="eggNOG" id="COG0544">
    <property type="taxonomic scope" value="Bacteria"/>
</dbReference>
<dbReference type="HOGENOM" id="CLU_033058_2_0_6"/>
<dbReference type="Proteomes" id="UP000000812">
    <property type="component" value="Chromosome"/>
</dbReference>
<dbReference type="GO" id="GO:0005737">
    <property type="term" value="C:cytoplasm"/>
    <property type="evidence" value="ECO:0007669"/>
    <property type="project" value="UniProtKB-SubCell"/>
</dbReference>
<dbReference type="GO" id="GO:0003755">
    <property type="term" value="F:peptidyl-prolyl cis-trans isomerase activity"/>
    <property type="evidence" value="ECO:0007669"/>
    <property type="project" value="UniProtKB-UniRule"/>
</dbReference>
<dbReference type="GO" id="GO:0044183">
    <property type="term" value="F:protein folding chaperone"/>
    <property type="evidence" value="ECO:0007669"/>
    <property type="project" value="TreeGrafter"/>
</dbReference>
<dbReference type="GO" id="GO:0043022">
    <property type="term" value="F:ribosome binding"/>
    <property type="evidence" value="ECO:0007669"/>
    <property type="project" value="TreeGrafter"/>
</dbReference>
<dbReference type="GO" id="GO:0051083">
    <property type="term" value="P:'de novo' cotranslational protein folding"/>
    <property type="evidence" value="ECO:0007669"/>
    <property type="project" value="TreeGrafter"/>
</dbReference>
<dbReference type="GO" id="GO:0051301">
    <property type="term" value="P:cell division"/>
    <property type="evidence" value="ECO:0007669"/>
    <property type="project" value="UniProtKB-KW"/>
</dbReference>
<dbReference type="GO" id="GO:0061077">
    <property type="term" value="P:chaperone-mediated protein folding"/>
    <property type="evidence" value="ECO:0007669"/>
    <property type="project" value="TreeGrafter"/>
</dbReference>
<dbReference type="GO" id="GO:0015031">
    <property type="term" value="P:protein transport"/>
    <property type="evidence" value="ECO:0007669"/>
    <property type="project" value="UniProtKB-UniRule"/>
</dbReference>
<dbReference type="GO" id="GO:0043335">
    <property type="term" value="P:protein unfolding"/>
    <property type="evidence" value="ECO:0007669"/>
    <property type="project" value="TreeGrafter"/>
</dbReference>
<dbReference type="Gene3D" id="3.10.50.40">
    <property type="match status" value="1"/>
</dbReference>
<dbReference type="Gene3D" id="3.30.70.1050">
    <property type="entry name" value="Trigger factor ribosome-binding domain"/>
    <property type="match status" value="1"/>
</dbReference>
<dbReference type="Gene3D" id="1.10.3120.10">
    <property type="entry name" value="Trigger factor, C-terminal domain"/>
    <property type="match status" value="1"/>
</dbReference>
<dbReference type="HAMAP" id="MF_00303">
    <property type="entry name" value="Trigger_factor_Tig"/>
    <property type="match status" value="1"/>
</dbReference>
<dbReference type="InterPro" id="IPR046357">
    <property type="entry name" value="PPIase_dom_sf"/>
</dbReference>
<dbReference type="InterPro" id="IPR005215">
    <property type="entry name" value="Trig_fac"/>
</dbReference>
<dbReference type="InterPro" id="IPR008880">
    <property type="entry name" value="Trigger_fac_C"/>
</dbReference>
<dbReference type="InterPro" id="IPR037041">
    <property type="entry name" value="Trigger_fac_C_sf"/>
</dbReference>
<dbReference type="InterPro" id="IPR008881">
    <property type="entry name" value="Trigger_fac_ribosome-bd_bac"/>
</dbReference>
<dbReference type="InterPro" id="IPR036611">
    <property type="entry name" value="Trigger_fac_ribosome-bd_sf"/>
</dbReference>
<dbReference type="InterPro" id="IPR027304">
    <property type="entry name" value="Trigger_fact/SurA_dom_sf"/>
</dbReference>
<dbReference type="NCBIfam" id="TIGR00115">
    <property type="entry name" value="tig"/>
    <property type="match status" value="1"/>
</dbReference>
<dbReference type="PANTHER" id="PTHR30560">
    <property type="entry name" value="TRIGGER FACTOR CHAPERONE AND PEPTIDYL-PROLYL CIS/TRANS ISOMERASE"/>
    <property type="match status" value="1"/>
</dbReference>
<dbReference type="PANTHER" id="PTHR30560:SF3">
    <property type="entry name" value="TRIGGER FACTOR-LIKE PROTEIN TIG, CHLOROPLASTIC"/>
    <property type="match status" value="1"/>
</dbReference>
<dbReference type="Pfam" id="PF05698">
    <property type="entry name" value="Trigger_C"/>
    <property type="match status" value="1"/>
</dbReference>
<dbReference type="Pfam" id="PF05697">
    <property type="entry name" value="Trigger_N"/>
    <property type="match status" value="1"/>
</dbReference>
<dbReference type="PIRSF" id="PIRSF003095">
    <property type="entry name" value="Trigger_factor"/>
    <property type="match status" value="1"/>
</dbReference>
<dbReference type="SUPFAM" id="SSF54534">
    <property type="entry name" value="FKBP-like"/>
    <property type="match status" value="1"/>
</dbReference>
<dbReference type="SUPFAM" id="SSF109998">
    <property type="entry name" value="Triger factor/SurA peptide-binding domain-like"/>
    <property type="match status" value="1"/>
</dbReference>
<dbReference type="SUPFAM" id="SSF102735">
    <property type="entry name" value="Trigger factor ribosome-binding domain"/>
    <property type="match status" value="1"/>
</dbReference>
<proteinExistence type="inferred from homology"/>